<gene>
    <name evidence="1" type="primary">valS</name>
    <name type="ordered locus">mma_0315</name>
</gene>
<organism>
    <name type="scientific">Janthinobacterium sp. (strain Marseille)</name>
    <name type="common">Minibacterium massiliensis</name>
    <dbReference type="NCBI Taxonomy" id="375286"/>
    <lineage>
        <taxon>Bacteria</taxon>
        <taxon>Pseudomonadati</taxon>
        <taxon>Pseudomonadota</taxon>
        <taxon>Betaproteobacteria</taxon>
        <taxon>Burkholderiales</taxon>
        <taxon>Oxalobacteraceae</taxon>
        <taxon>Janthinobacterium</taxon>
    </lineage>
</organism>
<evidence type="ECO:0000255" key="1">
    <source>
        <dbReference type="HAMAP-Rule" id="MF_02004"/>
    </source>
</evidence>
<comment type="function">
    <text evidence="1">Catalyzes the attachment of valine to tRNA(Val). As ValRS can inadvertently accommodate and process structurally similar amino acids such as threonine, to avoid such errors, it has a 'posttransfer' editing activity that hydrolyzes mischarged Thr-tRNA(Val) in a tRNA-dependent manner.</text>
</comment>
<comment type="catalytic activity">
    <reaction evidence="1">
        <text>tRNA(Val) + L-valine + ATP = L-valyl-tRNA(Val) + AMP + diphosphate</text>
        <dbReference type="Rhea" id="RHEA:10704"/>
        <dbReference type="Rhea" id="RHEA-COMP:9672"/>
        <dbReference type="Rhea" id="RHEA-COMP:9708"/>
        <dbReference type="ChEBI" id="CHEBI:30616"/>
        <dbReference type="ChEBI" id="CHEBI:33019"/>
        <dbReference type="ChEBI" id="CHEBI:57762"/>
        <dbReference type="ChEBI" id="CHEBI:78442"/>
        <dbReference type="ChEBI" id="CHEBI:78537"/>
        <dbReference type="ChEBI" id="CHEBI:456215"/>
        <dbReference type="EC" id="6.1.1.9"/>
    </reaction>
</comment>
<comment type="subunit">
    <text evidence="1">Monomer.</text>
</comment>
<comment type="subcellular location">
    <subcellularLocation>
        <location evidence="1">Cytoplasm</location>
    </subcellularLocation>
</comment>
<comment type="domain">
    <text evidence="1">ValRS has two distinct active sites: one for aminoacylation and one for editing. The misactivated threonine is translocated from the active site to the editing site.</text>
</comment>
<comment type="domain">
    <text evidence="1">The C-terminal coiled-coil domain is crucial for aminoacylation activity.</text>
</comment>
<comment type="similarity">
    <text evidence="1">Belongs to the class-I aminoacyl-tRNA synthetase family. ValS type 1 subfamily.</text>
</comment>
<feature type="chain" id="PRO_1000022167" description="Valine--tRNA ligase">
    <location>
        <begin position="1"/>
        <end position="965"/>
    </location>
</feature>
<feature type="coiled-coil region" evidence="1">
    <location>
        <begin position="803"/>
        <end position="835"/>
    </location>
</feature>
<feature type="coiled-coil region" evidence="1">
    <location>
        <begin position="900"/>
        <end position="965"/>
    </location>
</feature>
<feature type="short sequence motif" description="'HIGH' region">
    <location>
        <begin position="44"/>
        <end position="54"/>
    </location>
</feature>
<feature type="short sequence motif" description="'KMSKS' region">
    <location>
        <begin position="559"/>
        <end position="563"/>
    </location>
</feature>
<feature type="binding site" evidence="1">
    <location>
        <position position="562"/>
    </location>
    <ligand>
        <name>ATP</name>
        <dbReference type="ChEBI" id="CHEBI:30616"/>
    </ligand>
</feature>
<sequence length="965" mass="108440">MELAKSFDPADIEAFWRTEWEKRGYYTATTDADKPAFSIQLPPPNVTGTLHLGHGFNQTIMDGLTRYHRMRGFNTAWIPGTDHAGIATQIVVERQLDAQKITRHDLGREKFVEKVWEWKEKSGSTITGQIRRLGASPDWSREYFTMDEPRSKTVTEVFVRLVEQGLIYRGKRLVNWDPVLGTAVSDLEVVSEEEDGQMWNIRYPLADGSSYKFPIAFDEAGNATEWEERNFIVVATTRPETMLGDVAVAVDPTDTRYQHLVGKLLTLPLCERTIPIIADDYVDKEFGTGCVKITPAHDFNDYAVGQRHNLDKISILTLDAKINENAPAAYQGLDRFAARKQIVADLDAQGLLELVKPHKLMVPRGDRTNTVIEPMLTDQWFVAMSKPAPEGTYFPGKSITEVALEKVANGEIKMLPENWTNTYNQWLNNIQDWCISRQLWWGHQIPAWYDSEGKVYVARNEDEAKAKATAAGYNGPLTRDEDVLDTWFSSALVPFSTLGWPEETPDFKTFLPSSVLVTGFDIIFFWVARMVMMTTHFTGKVPFKTVYVHGLIRDSSGQKMSKSKGNTLDPIDLIDGINVDELVAKRTVGLMNPKQAASIEKSTRKEFPAGISAYGTDALRFTMASYASLGRNINFDLSRCEGYRNFCNKLWNATRFVLMNCEGHDCGFRDAPCAAGDCDPGGYTDFSQADRWIVSKLQRTEADIAKGFADYRFDNIAASLYQFIWDEYCDWYLEVAKVQIQTGTEAQQRATRRTLLRVLETILRLAHPVIPFITEALWQTVAPLTGYKPNPAGDSIMLQPYPEAQAGKIDEQAENWMAELKAMTDACRNLRGEMQLSPALRVPLIMEASDPTQAARLQSFAPYLQALAKLSEVNVADKLPESPAPVSIVGTAKLMLKVEIDVAAERERLSKEIARLDGEITKANSKLGNESFVARAPAQVVAQEKERVANFSATLNKLREQFAKL</sequence>
<name>SYV_JANMA</name>
<proteinExistence type="inferred from homology"/>
<keyword id="KW-0030">Aminoacyl-tRNA synthetase</keyword>
<keyword id="KW-0067">ATP-binding</keyword>
<keyword id="KW-0175">Coiled coil</keyword>
<keyword id="KW-0963">Cytoplasm</keyword>
<keyword id="KW-0436">Ligase</keyword>
<keyword id="KW-0547">Nucleotide-binding</keyword>
<keyword id="KW-0648">Protein biosynthesis</keyword>
<accession>A6SUQ8</accession>
<protein>
    <recommendedName>
        <fullName evidence="1">Valine--tRNA ligase</fullName>
        <ecNumber evidence="1">6.1.1.9</ecNumber>
    </recommendedName>
    <alternativeName>
        <fullName evidence="1">Valyl-tRNA synthetase</fullName>
        <shortName evidence="1">ValRS</shortName>
    </alternativeName>
</protein>
<reference key="1">
    <citation type="journal article" date="2007" name="PLoS Genet.">
        <title>Genome analysis of Minibacterium massiliensis highlights the convergent evolution of water-living bacteria.</title>
        <authorList>
            <person name="Audic S."/>
            <person name="Robert C."/>
            <person name="Campagna B."/>
            <person name="Parinello H."/>
            <person name="Claverie J.-M."/>
            <person name="Raoult D."/>
            <person name="Drancourt M."/>
        </authorList>
    </citation>
    <scope>NUCLEOTIDE SEQUENCE [LARGE SCALE GENOMIC DNA]</scope>
    <source>
        <strain>Marseille</strain>
    </source>
</reference>
<dbReference type="EC" id="6.1.1.9" evidence="1"/>
<dbReference type="EMBL" id="CP000269">
    <property type="protein sequence ID" value="ABR88574.1"/>
    <property type="molecule type" value="Genomic_DNA"/>
</dbReference>
<dbReference type="RefSeq" id="WP_012078180.1">
    <property type="nucleotide sequence ID" value="NC_009659.1"/>
</dbReference>
<dbReference type="SMR" id="A6SUQ8"/>
<dbReference type="STRING" id="375286.mma_0315"/>
<dbReference type="KEGG" id="mms:mma_0315"/>
<dbReference type="eggNOG" id="COG0525">
    <property type="taxonomic scope" value="Bacteria"/>
</dbReference>
<dbReference type="HOGENOM" id="CLU_001493_0_2_4"/>
<dbReference type="OrthoDB" id="9810365at2"/>
<dbReference type="Proteomes" id="UP000006388">
    <property type="component" value="Chromosome"/>
</dbReference>
<dbReference type="GO" id="GO:0005829">
    <property type="term" value="C:cytosol"/>
    <property type="evidence" value="ECO:0007669"/>
    <property type="project" value="TreeGrafter"/>
</dbReference>
<dbReference type="GO" id="GO:0002161">
    <property type="term" value="F:aminoacyl-tRNA deacylase activity"/>
    <property type="evidence" value="ECO:0007669"/>
    <property type="project" value="InterPro"/>
</dbReference>
<dbReference type="GO" id="GO:0005524">
    <property type="term" value="F:ATP binding"/>
    <property type="evidence" value="ECO:0007669"/>
    <property type="project" value="UniProtKB-UniRule"/>
</dbReference>
<dbReference type="GO" id="GO:0004832">
    <property type="term" value="F:valine-tRNA ligase activity"/>
    <property type="evidence" value="ECO:0007669"/>
    <property type="project" value="UniProtKB-UniRule"/>
</dbReference>
<dbReference type="GO" id="GO:0006438">
    <property type="term" value="P:valyl-tRNA aminoacylation"/>
    <property type="evidence" value="ECO:0007669"/>
    <property type="project" value="UniProtKB-UniRule"/>
</dbReference>
<dbReference type="CDD" id="cd07962">
    <property type="entry name" value="Anticodon_Ia_Val"/>
    <property type="match status" value="1"/>
</dbReference>
<dbReference type="CDD" id="cd00817">
    <property type="entry name" value="ValRS_core"/>
    <property type="match status" value="1"/>
</dbReference>
<dbReference type="FunFam" id="1.10.287.380:FF:000001">
    <property type="entry name" value="Valine--tRNA ligase"/>
    <property type="match status" value="1"/>
</dbReference>
<dbReference type="FunFam" id="3.90.740.10:FF:000010">
    <property type="entry name" value="Valine--tRNA ligase"/>
    <property type="match status" value="1"/>
</dbReference>
<dbReference type="FunFam" id="1.10.730.10:FF:000009">
    <property type="entry name" value="Valine--tRNA ligase, mitochondrial"/>
    <property type="match status" value="1"/>
</dbReference>
<dbReference type="FunFam" id="3.40.50.620:FF:000020">
    <property type="entry name" value="Valine--tRNA ligase, mitochondrial"/>
    <property type="match status" value="1"/>
</dbReference>
<dbReference type="FunFam" id="3.40.50.620:FF:000078">
    <property type="entry name" value="Valine--tRNA ligase, mitochondrial"/>
    <property type="match status" value="1"/>
</dbReference>
<dbReference type="Gene3D" id="3.40.50.620">
    <property type="entry name" value="HUPs"/>
    <property type="match status" value="2"/>
</dbReference>
<dbReference type="Gene3D" id="1.10.730.10">
    <property type="entry name" value="Isoleucyl-tRNA Synthetase, Domain 1"/>
    <property type="match status" value="1"/>
</dbReference>
<dbReference type="Gene3D" id="1.10.287.380">
    <property type="entry name" value="Valyl-tRNA synthetase, C-terminal domain"/>
    <property type="match status" value="1"/>
</dbReference>
<dbReference type="Gene3D" id="3.90.740.10">
    <property type="entry name" value="Valyl/Leucyl/Isoleucyl-tRNA synthetase, editing domain"/>
    <property type="match status" value="1"/>
</dbReference>
<dbReference type="HAMAP" id="MF_02004">
    <property type="entry name" value="Val_tRNA_synth_type1"/>
    <property type="match status" value="1"/>
</dbReference>
<dbReference type="InterPro" id="IPR001412">
    <property type="entry name" value="aa-tRNA-synth_I_CS"/>
</dbReference>
<dbReference type="InterPro" id="IPR002300">
    <property type="entry name" value="aa-tRNA-synth_Ia"/>
</dbReference>
<dbReference type="InterPro" id="IPR033705">
    <property type="entry name" value="Anticodon_Ia_Val"/>
</dbReference>
<dbReference type="InterPro" id="IPR013155">
    <property type="entry name" value="M/V/L/I-tRNA-synth_anticd-bd"/>
</dbReference>
<dbReference type="InterPro" id="IPR014729">
    <property type="entry name" value="Rossmann-like_a/b/a_fold"/>
</dbReference>
<dbReference type="InterPro" id="IPR010978">
    <property type="entry name" value="tRNA-bd_arm"/>
</dbReference>
<dbReference type="InterPro" id="IPR009080">
    <property type="entry name" value="tRNAsynth_Ia_anticodon-bd"/>
</dbReference>
<dbReference type="InterPro" id="IPR037118">
    <property type="entry name" value="Val-tRNA_synth_C_sf"/>
</dbReference>
<dbReference type="InterPro" id="IPR019499">
    <property type="entry name" value="Val-tRNA_synth_tRNA-bd"/>
</dbReference>
<dbReference type="InterPro" id="IPR009008">
    <property type="entry name" value="Val/Leu/Ile-tRNA-synth_edit"/>
</dbReference>
<dbReference type="InterPro" id="IPR002303">
    <property type="entry name" value="Valyl-tRNA_ligase"/>
</dbReference>
<dbReference type="NCBIfam" id="NF004349">
    <property type="entry name" value="PRK05729.1"/>
    <property type="match status" value="1"/>
</dbReference>
<dbReference type="NCBIfam" id="TIGR00422">
    <property type="entry name" value="valS"/>
    <property type="match status" value="1"/>
</dbReference>
<dbReference type="PANTHER" id="PTHR11946:SF93">
    <property type="entry name" value="VALINE--TRNA LIGASE, CHLOROPLASTIC_MITOCHONDRIAL 2"/>
    <property type="match status" value="1"/>
</dbReference>
<dbReference type="PANTHER" id="PTHR11946">
    <property type="entry name" value="VALYL-TRNA SYNTHETASES"/>
    <property type="match status" value="1"/>
</dbReference>
<dbReference type="Pfam" id="PF08264">
    <property type="entry name" value="Anticodon_1"/>
    <property type="match status" value="1"/>
</dbReference>
<dbReference type="Pfam" id="PF00133">
    <property type="entry name" value="tRNA-synt_1"/>
    <property type="match status" value="1"/>
</dbReference>
<dbReference type="Pfam" id="PF10458">
    <property type="entry name" value="Val_tRNA-synt_C"/>
    <property type="match status" value="1"/>
</dbReference>
<dbReference type="PRINTS" id="PR00986">
    <property type="entry name" value="TRNASYNTHVAL"/>
</dbReference>
<dbReference type="SUPFAM" id="SSF47323">
    <property type="entry name" value="Anticodon-binding domain of a subclass of class I aminoacyl-tRNA synthetases"/>
    <property type="match status" value="1"/>
</dbReference>
<dbReference type="SUPFAM" id="SSF52374">
    <property type="entry name" value="Nucleotidylyl transferase"/>
    <property type="match status" value="1"/>
</dbReference>
<dbReference type="SUPFAM" id="SSF46589">
    <property type="entry name" value="tRNA-binding arm"/>
    <property type="match status" value="1"/>
</dbReference>
<dbReference type="SUPFAM" id="SSF50677">
    <property type="entry name" value="ValRS/IleRS/LeuRS editing domain"/>
    <property type="match status" value="1"/>
</dbReference>
<dbReference type="PROSITE" id="PS00178">
    <property type="entry name" value="AA_TRNA_LIGASE_I"/>
    <property type="match status" value="1"/>
</dbReference>